<accession>P07417</accession>
<keyword id="KW-0903">Direct protein sequencing</keyword>
<keyword id="KW-0349">Heme</keyword>
<keyword id="KW-0408">Iron</keyword>
<keyword id="KW-0479">Metal-binding</keyword>
<keyword id="KW-0561">Oxygen transport</keyword>
<keyword id="KW-0813">Transport</keyword>
<proteinExistence type="evidence at protein level"/>
<name>HBA_AEGMO</name>
<gene>
    <name type="primary">HBAA</name>
</gene>
<reference key="1">
    <citation type="journal article" date="1987" name="Biol. Chem. Hoppe-Seyler">
        <title>High altitude respiration of birds. The primary structures of the major and minor hemoglobin component of adult European black vulture (Aegypius monachus, Aegypiinae).</title>
        <authorList>
            <person name="Hiebl I."/>
            <person name="Schneeganss D."/>
            <person name="Grimm F."/>
            <person name="Kosters J."/>
            <person name="Braunitzer G."/>
        </authorList>
    </citation>
    <scope>PROTEIN SEQUENCE OF 2-142</scope>
</reference>
<protein>
    <recommendedName>
        <fullName>Hemoglobin subunit alpha-A</fullName>
    </recommendedName>
    <alternativeName>
        <fullName>Alpha-A-globin</fullName>
    </alternativeName>
    <alternativeName>
        <fullName>Hemoglobin alpha-A chain</fullName>
    </alternativeName>
</protein>
<sequence length="142" mass="15613">MVLSANDKTNVKTVFTKITGHAEDYGAETLERMFITYPPTKTYFPHFDLHHGSAQIKAHGKKVVGALIEAVNHIDDIAGALSKLSDLHAQKLRVDPVNFKLLGQCFLVVVAIHHPSVLTPEVHASLDKFLCAVGNVLTAKYR</sequence>
<comment type="function">
    <text>Involved in oxygen transport from the lung to the various peripheral tissues.</text>
</comment>
<comment type="subunit">
    <text>Heterotetramer of two alpha chains and two beta chains.</text>
</comment>
<comment type="tissue specificity">
    <text>Red blood cells.</text>
</comment>
<comment type="similarity">
    <text evidence="1">Belongs to the globin family.</text>
</comment>
<evidence type="ECO:0000255" key="1">
    <source>
        <dbReference type="PROSITE-ProRule" id="PRU00238"/>
    </source>
</evidence>
<evidence type="ECO:0000269" key="2">
    <source>
    </source>
</evidence>
<feature type="initiator methionine" description="Removed" evidence="2">
    <location>
        <position position="1"/>
    </location>
</feature>
<feature type="chain" id="PRO_0000052535" description="Hemoglobin subunit alpha-A">
    <location>
        <begin position="2"/>
        <end position="142"/>
    </location>
</feature>
<feature type="domain" description="Globin" evidence="1">
    <location>
        <begin position="2"/>
        <end position="142"/>
    </location>
</feature>
<feature type="binding site" evidence="1">
    <location>
        <position position="59"/>
    </location>
    <ligand>
        <name>O2</name>
        <dbReference type="ChEBI" id="CHEBI:15379"/>
    </ligand>
</feature>
<feature type="binding site" description="proximal binding residue" evidence="1">
    <location>
        <position position="88"/>
    </location>
    <ligand>
        <name>heme b</name>
        <dbReference type="ChEBI" id="CHEBI:60344"/>
    </ligand>
    <ligandPart>
        <name>Fe</name>
        <dbReference type="ChEBI" id="CHEBI:18248"/>
    </ligandPart>
</feature>
<organism>
    <name type="scientific">Aegypius monachus</name>
    <name type="common">Cinereous vulture</name>
    <dbReference type="NCBI Taxonomy" id="8959"/>
    <lineage>
        <taxon>Eukaryota</taxon>
        <taxon>Metazoa</taxon>
        <taxon>Chordata</taxon>
        <taxon>Craniata</taxon>
        <taxon>Vertebrata</taxon>
        <taxon>Euteleostomi</taxon>
        <taxon>Archelosauria</taxon>
        <taxon>Archosauria</taxon>
        <taxon>Dinosauria</taxon>
        <taxon>Saurischia</taxon>
        <taxon>Theropoda</taxon>
        <taxon>Coelurosauria</taxon>
        <taxon>Aves</taxon>
        <taxon>Neognathae</taxon>
        <taxon>Neoaves</taxon>
        <taxon>Telluraves</taxon>
        <taxon>Accipitrimorphae</taxon>
        <taxon>Accipitriformes</taxon>
        <taxon>Accipitridae</taxon>
        <taxon>Accipitrinae</taxon>
        <taxon>Aegypius</taxon>
    </lineage>
</organism>
<dbReference type="PIR" id="B26429">
    <property type="entry name" value="B26429"/>
</dbReference>
<dbReference type="SMR" id="P07417"/>
<dbReference type="GO" id="GO:0072562">
    <property type="term" value="C:blood microparticle"/>
    <property type="evidence" value="ECO:0007669"/>
    <property type="project" value="TreeGrafter"/>
</dbReference>
<dbReference type="GO" id="GO:0031838">
    <property type="term" value="C:haptoglobin-hemoglobin complex"/>
    <property type="evidence" value="ECO:0007669"/>
    <property type="project" value="TreeGrafter"/>
</dbReference>
<dbReference type="GO" id="GO:0005833">
    <property type="term" value="C:hemoglobin complex"/>
    <property type="evidence" value="ECO:0007669"/>
    <property type="project" value="InterPro"/>
</dbReference>
<dbReference type="GO" id="GO:0031720">
    <property type="term" value="F:haptoglobin binding"/>
    <property type="evidence" value="ECO:0007669"/>
    <property type="project" value="TreeGrafter"/>
</dbReference>
<dbReference type="GO" id="GO:0020037">
    <property type="term" value="F:heme binding"/>
    <property type="evidence" value="ECO:0007669"/>
    <property type="project" value="InterPro"/>
</dbReference>
<dbReference type="GO" id="GO:0005506">
    <property type="term" value="F:iron ion binding"/>
    <property type="evidence" value="ECO:0007669"/>
    <property type="project" value="InterPro"/>
</dbReference>
<dbReference type="GO" id="GO:0043177">
    <property type="term" value="F:organic acid binding"/>
    <property type="evidence" value="ECO:0007669"/>
    <property type="project" value="TreeGrafter"/>
</dbReference>
<dbReference type="GO" id="GO:0019825">
    <property type="term" value="F:oxygen binding"/>
    <property type="evidence" value="ECO:0007669"/>
    <property type="project" value="InterPro"/>
</dbReference>
<dbReference type="GO" id="GO:0005344">
    <property type="term" value="F:oxygen carrier activity"/>
    <property type="evidence" value="ECO:0007669"/>
    <property type="project" value="UniProtKB-KW"/>
</dbReference>
<dbReference type="GO" id="GO:0004601">
    <property type="term" value="F:peroxidase activity"/>
    <property type="evidence" value="ECO:0007669"/>
    <property type="project" value="TreeGrafter"/>
</dbReference>
<dbReference type="GO" id="GO:0042744">
    <property type="term" value="P:hydrogen peroxide catabolic process"/>
    <property type="evidence" value="ECO:0007669"/>
    <property type="project" value="TreeGrafter"/>
</dbReference>
<dbReference type="CDD" id="cd08927">
    <property type="entry name" value="Hb-alpha-like"/>
    <property type="match status" value="1"/>
</dbReference>
<dbReference type="FunFam" id="1.10.490.10:FF:000002">
    <property type="entry name" value="Hemoglobin subunit alpha"/>
    <property type="match status" value="1"/>
</dbReference>
<dbReference type="Gene3D" id="1.10.490.10">
    <property type="entry name" value="Globins"/>
    <property type="match status" value="1"/>
</dbReference>
<dbReference type="InterPro" id="IPR000971">
    <property type="entry name" value="Globin"/>
</dbReference>
<dbReference type="InterPro" id="IPR009050">
    <property type="entry name" value="Globin-like_sf"/>
</dbReference>
<dbReference type="InterPro" id="IPR012292">
    <property type="entry name" value="Globin/Proto"/>
</dbReference>
<dbReference type="InterPro" id="IPR002338">
    <property type="entry name" value="Hemoglobin_a-typ"/>
</dbReference>
<dbReference type="InterPro" id="IPR050056">
    <property type="entry name" value="Hemoglobin_oxygen_transport"/>
</dbReference>
<dbReference type="InterPro" id="IPR002339">
    <property type="entry name" value="Hemoglobin_pi"/>
</dbReference>
<dbReference type="PANTHER" id="PTHR11442">
    <property type="entry name" value="HEMOGLOBIN FAMILY MEMBER"/>
    <property type="match status" value="1"/>
</dbReference>
<dbReference type="PANTHER" id="PTHR11442:SF48">
    <property type="entry name" value="HEMOGLOBIN SUBUNIT ALPHA"/>
    <property type="match status" value="1"/>
</dbReference>
<dbReference type="Pfam" id="PF00042">
    <property type="entry name" value="Globin"/>
    <property type="match status" value="1"/>
</dbReference>
<dbReference type="PRINTS" id="PR00612">
    <property type="entry name" value="ALPHAHAEM"/>
</dbReference>
<dbReference type="PRINTS" id="PR00815">
    <property type="entry name" value="PIHAEM"/>
</dbReference>
<dbReference type="SUPFAM" id="SSF46458">
    <property type="entry name" value="Globin-like"/>
    <property type="match status" value="1"/>
</dbReference>
<dbReference type="PROSITE" id="PS01033">
    <property type="entry name" value="GLOBIN"/>
    <property type="match status" value="1"/>
</dbReference>